<evidence type="ECO:0000255" key="1"/>
<evidence type="ECO:0000269" key="2">
    <source>
    </source>
</evidence>
<evidence type="ECO:0000305" key="3"/>
<proteinExistence type="evidence at protein level"/>
<organism>
    <name type="scientific">Aplysia kurodai</name>
    <name type="common">Kuroda's sea hare</name>
    <dbReference type="NCBI Taxonomy" id="6501"/>
    <lineage>
        <taxon>Eukaryota</taxon>
        <taxon>Metazoa</taxon>
        <taxon>Spiralia</taxon>
        <taxon>Lophotrochozoa</taxon>
        <taxon>Mollusca</taxon>
        <taxon>Gastropoda</taxon>
        <taxon>Heterobranchia</taxon>
        <taxon>Euthyneura</taxon>
        <taxon>Tectipleura</taxon>
        <taxon>Aplysiida</taxon>
        <taxon>Aplysioidea</taxon>
        <taxon>Aplysiidae</taxon>
        <taxon>Aplysia</taxon>
    </lineage>
</organism>
<protein>
    <recommendedName>
        <fullName>Aplysianin-A</fullName>
    </recommendedName>
</protein>
<keyword id="KW-0044">Antibiotic</keyword>
<keyword id="KW-0929">Antimicrobial</keyword>
<keyword id="KW-0903">Direct protein sequencing</keyword>
<keyword id="KW-0325">Glycoprotein</keyword>
<keyword id="KW-0732">Signal</keyword>
<reference key="1">
    <citation type="journal article" date="1995" name="FEBS Lett.">
        <title>Molecular cloning of the defense factor in the albumen gland of the sea hare Aplysia kurodai.</title>
        <authorList>
            <person name="Takamatsu N."/>
            <person name="Shiba T."/>
            <person name="Muramoto K."/>
            <person name="Kamiya H."/>
        </authorList>
    </citation>
    <scope>NUCLEOTIDE SEQUENCE [MRNA]</scope>
    <scope>PROTEIN SEQUENCE OF 20-44 AND 95-115</scope>
    <source>
        <tissue>Albumen gland</tissue>
    </source>
</reference>
<sequence length="556" mass="62376">MAVRFLALGLLIFVTSCSGRRVCESQQSCDDEQCDETLNIAIVGAGPSGAYSAYKMRHSGKDVGLFEYCNRVGGRLYTYQLPNTPDVNLELGGMRYITGAHNILQEVTKELGLKSVLFTEGFGRPGRTRYFLRGQSLTHEEVQSGDVPYNLTTIEKLNQGRIYEYYLKELTGFDIGNGSISREQLLKLRVSDGRLLYQLTFDEALDLVASPEGKEFARDVHVFHTEVTSDANAVSVFDDHLGEDGAGDAILTVEEGMQKVPKELIKEFKKTSASNQVQLNKYLQAIRSKSDHSFVLYFRPTSTVDGKTTILDYRPLQRVCARQVILALPVFALRRLDWPPLHEGRAETAYAAVRNMAASKVFMTFDQAWWLDRNFTDNTAFVTKGDTPFSQMYDWKKSNVSGDYILIASYADGNNTLYQKVLRDQGESINGSEPGANRVSEPLKNNILDHLSEAYGVDRSTIPEPKTAVSQFWTDYPFGCGWITWRAGYHFDDVMSTMRRPSLKDEVYVVGADYSWGLMSSWTEGALETADAVLKDYFKGECAKPPSVDHLDSHMA</sequence>
<name>APLY_APLKU</name>
<comment type="function">
    <text>Has antibacterial activity against Gram-negative and Gram-positive bacteria.</text>
</comment>
<comment type="subunit">
    <text>Homotetramer.</text>
</comment>
<comment type="tissue specificity">
    <text>Albumen gland.</text>
</comment>
<comment type="similarity">
    <text evidence="3">To A.fulica achacin protein.</text>
</comment>
<dbReference type="EMBL" id="D83255">
    <property type="protein sequence ID" value="BAA11867.1"/>
    <property type="molecule type" value="mRNA"/>
</dbReference>
<dbReference type="PIR" id="S68408">
    <property type="entry name" value="S68408"/>
</dbReference>
<dbReference type="SMR" id="Q17043"/>
<dbReference type="GO" id="GO:0001716">
    <property type="term" value="F:L-amino-acid oxidase activity"/>
    <property type="evidence" value="ECO:0007669"/>
    <property type="project" value="TreeGrafter"/>
</dbReference>
<dbReference type="GO" id="GO:0009063">
    <property type="term" value="P:amino acid catabolic process"/>
    <property type="evidence" value="ECO:0007669"/>
    <property type="project" value="TreeGrafter"/>
</dbReference>
<dbReference type="GO" id="GO:0042742">
    <property type="term" value="P:defense response to bacterium"/>
    <property type="evidence" value="ECO:0007669"/>
    <property type="project" value="UniProtKB-KW"/>
</dbReference>
<dbReference type="Gene3D" id="3.50.50.60">
    <property type="entry name" value="FAD/NAD(P)-binding domain"/>
    <property type="match status" value="1"/>
</dbReference>
<dbReference type="InterPro" id="IPR002937">
    <property type="entry name" value="Amino_oxidase"/>
</dbReference>
<dbReference type="InterPro" id="IPR036188">
    <property type="entry name" value="FAD/NAD-bd_sf"/>
</dbReference>
<dbReference type="InterPro" id="IPR050281">
    <property type="entry name" value="Flavin_monoamine_oxidase"/>
</dbReference>
<dbReference type="PANTHER" id="PTHR10742:SF342">
    <property type="entry name" value="AMINE OXIDASE"/>
    <property type="match status" value="1"/>
</dbReference>
<dbReference type="PANTHER" id="PTHR10742">
    <property type="entry name" value="FLAVIN MONOAMINE OXIDASE"/>
    <property type="match status" value="1"/>
</dbReference>
<dbReference type="Pfam" id="PF01593">
    <property type="entry name" value="Amino_oxidase"/>
    <property type="match status" value="1"/>
</dbReference>
<dbReference type="SUPFAM" id="SSF54373">
    <property type="entry name" value="FAD-linked reductases, C-terminal domain"/>
    <property type="match status" value="1"/>
</dbReference>
<dbReference type="SUPFAM" id="SSF51905">
    <property type="entry name" value="FAD/NAD(P)-binding domain"/>
    <property type="match status" value="1"/>
</dbReference>
<feature type="signal peptide" evidence="2">
    <location>
        <begin position="1"/>
        <end position="19"/>
    </location>
</feature>
<feature type="chain" id="PRO_0000020749" description="Aplysianin-A">
    <location>
        <begin position="20"/>
        <end position="556"/>
    </location>
</feature>
<feature type="glycosylation site" description="N-linked (GlcNAc...) asparagine" evidence="1">
    <location>
        <position position="150"/>
    </location>
</feature>
<feature type="glycosylation site" description="N-linked (GlcNAc...) asparagine" evidence="1">
    <location>
        <position position="177"/>
    </location>
</feature>
<feature type="glycosylation site" description="N-linked (GlcNAc...) asparagine" evidence="1">
    <location>
        <position position="374"/>
    </location>
</feature>
<feature type="glycosylation site" description="N-linked (GlcNAc...) asparagine" evidence="1">
    <location>
        <position position="399"/>
    </location>
</feature>
<feature type="glycosylation site" description="N-linked (GlcNAc...) asparagine" evidence="1">
    <location>
        <position position="414"/>
    </location>
</feature>
<feature type="glycosylation site" description="N-linked (GlcNAc...) asparagine" evidence="1">
    <location>
        <position position="430"/>
    </location>
</feature>
<accession>Q17043</accession>